<keyword id="KW-0067">ATP-binding</keyword>
<keyword id="KW-0436">Ligase</keyword>
<keyword id="KW-0547">Nucleotide-binding</keyword>
<keyword id="KW-1185">Reference proteome</keyword>
<gene>
    <name evidence="5" type="primary">cnsG</name>
    <name type="ORF">PEX2_055410</name>
</gene>
<name>CNSG_PENEN</name>
<proteinExistence type="inferred from homology"/>
<sequence length="481" mass="52897">MESPQLPPSMKRPAIVYGDKTPTILETTLGHLLDELSDIHRDKAAVEFPWQSIRRTYSELAKTSKLVAISLLSAGLCHGDRIGILTGNRYEFLDVFLAAARIGCPAVILQSNMSPGEMKAAVLKSGTTGNPKAAVLTHRNVVNNSHFFSRACDFEQSDIICSPLPLCHSFGLVSAFLCSFMRGCLILFPTEKFSADAVVDVLQNRDVTVIYGVPTMFFAVLEKLQGRGHKPRSMVKAIAGGAPVPYALITQICQDMGVQYFLNGYGMTETSPATFISPLGLCSESSLRTIGKVLPHTNARIVDRWGRTVQQGEKGELCISGLPLQKGYWEDEEKTSEIMTRDADGVIWLHTGDEAIIGEDDHCTITGRIKDIIIRGGLNISPVEIEERLILHPFIQEASVVGLPDKTRGEIVGCFLKQYVDMQRPSDEAVRAWVRELLGWHKAPEAIFWIGDAGIGEDFPKTASGKHQKEKLKDIGTYLLA</sequence>
<accession>A0A0A2J5U8</accession>
<organism>
    <name type="scientific">Penicillium expansum</name>
    <name type="common">Blue mold rot fungus</name>
    <dbReference type="NCBI Taxonomy" id="27334"/>
    <lineage>
        <taxon>Eukaryota</taxon>
        <taxon>Fungi</taxon>
        <taxon>Dikarya</taxon>
        <taxon>Ascomycota</taxon>
        <taxon>Pezizomycotina</taxon>
        <taxon>Eurotiomycetes</taxon>
        <taxon>Eurotiomycetidae</taxon>
        <taxon>Eurotiales</taxon>
        <taxon>Aspergillaceae</taxon>
        <taxon>Penicillium</taxon>
    </lineage>
</organism>
<comment type="function">
    <text evidence="3 4">Acyl-CoA ligase; part of the gene cluster that mediates the biosynthesis of communesins, a prominent class of indole alkaloids with great potential as pharmaceuticals (PubMed:25571861). Communesins are biosynthesized by the coupling of tryptamine and aurantioclavine, two building blocks derived from L-tryptophan (PubMed:25571861). The L-tryptophan decarboxylase cnsB converts L-tryptophan to tryptamine, whereas the tryptophan dimethylallyltransferase cnsF converts L-tryptophan to 4-dimethylallyl tryptophan which is further transformed to aurantioclavine by the aurantioclavine synthase cnsA, probably aided by the catalase cnsD (PubMed:25571861). The cytochrome P450 monooxygenase cnsC catalyzes the heterodimeric coupling between the two different indole moieties, tryptamine and aurantioclavine, to construct vicinal quaternary stereocenters and yield the heptacyclic communesin scaffold (PubMed:26963294). The O-methyltransferase cnsE then methylates the communesin scaffold to produce communesin K, the simplest characterized communesin that contains the heptacyclic core (PubMed:25571861). The dioxygenase cnsJ converts communesin K into communesin I (PubMed:25571861). Acylation to introduce the hexadienyl group at position N16 of communesin I by the acyltransferase cnsK leads to the production of communesin B. The hexadienyl group is produced by the highly reducing polyketide synthase cnsI, before being hydrolytically removed from cnsI by the serine hydrolase cnsH, converted into hexadienyl-CoA by the CoA ligase cnsG, and then transferred to communesin I by cnsK (PubMed:25571861). Surprisingly, cnsK may also be a promiscuous acyltransferase that can tolerate a range of acyl groups, including acetyl-, propionyl-, and butyryl-CoA, which lead to communesins A, G and H respectively (PubMed:25571861). The roles of the alpha-ketoglutarate-dependent dioxygenases cnsM and cnsP have still to be determined (PubMed:25571861).</text>
</comment>
<comment type="pathway">
    <text evidence="7">Alkaloid biosynthesis.</text>
</comment>
<comment type="similarity">
    <text evidence="6">Belongs to the ATP-dependent AMP-binding enzyme family.</text>
</comment>
<protein>
    <recommendedName>
        <fullName evidence="5">Acyl-CoA ligase cnsG</fullName>
        <ecNumber evidence="7">6.2.1.-</ecNumber>
    </recommendedName>
    <alternativeName>
        <fullName evidence="5">Communesin biosynthesis cluster protein G</fullName>
    </alternativeName>
</protein>
<evidence type="ECO:0000250" key="1">
    <source>
        <dbReference type="UniProtKB" id="Q08AH3"/>
    </source>
</evidence>
<evidence type="ECO:0000250" key="2">
    <source>
        <dbReference type="UniProtKB" id="Q4WR83"/>
    </source>
</evidence>
<evidence type="ECO:0000269" key="3">
    <source>
    </source>
</evidence>
<evidence type="ECO:0000269" key="4">
    <source>
    </source>
</evidence>
<evidence type="ECO:0000303" key="5">
    <source>
    </source>
</evidence>
<evidence type="ECO:0000305" key="6"/>
<evidence type="ECO:0000305" key="7">
    <source>
    </source>
</evidence>
<reference key="1">
    <citation type="journal article" date="2015" name="Mol. Plant Microbe Interact.">
        <title>Genome, transcriptome, and functional analyses of Penicillium expansum provide new insights into secondary metabolism and pathogenicity.</title>
        <authorList>
            <person name="Ballester A.R."/>
            <person name="Marcet-Houben M."/>
            <person name="Levin E."/>
            <person name="Sela N."/>
            <person name="Selma-Lazaro C."/>
            <person name="Carmona L."/>
            <person name="Wisniewski M."/>
            <person name="Droby S."/>
            <person name="Gonzalez-Candelas L."/>
            <person name="Gabaldon T."/>
        </authorList>
    </citation>
    <scope>NUCLEOTIDE SEQUENCE [LARGE SCALE GENOMIC DNA]</scope>
    <source>
        <strain>MD-8</strain>
    </source>
</reference>
<reference key="2">
    <citation type="journal article" date="2015" name="Angew. Chem. Int. Ed.">
        <title>Elucidation of the concise biosynthetic pathway of the communesin indole alkaloids.</title>
        <authorList>
            <person name="Lin H.C."/>
            <person name="Chiou G."/>
            <person name="Chooi Y.H."/>
            <person name="McMahon T.C."/>
            <person name="Xu W."/>
            <person name="Garg N.K."/>
            <person name="Tang Y."/>
        </authorList>
    </citation>
    <scope>IDENTIFICATION</scope>
    <scope>FUNCTION</scope>
    <scope>PATHWAY</scope>
</reference>
<reference key="3">
    <citation type="journal article" date="2016" name="J. Am. Chem. Soc.">
        <title>P450-mediated coupling of indole fragments to forge communesin and unnatural isomers.</title>
        <authorList>
            <person name="Lin H.C."/>
            <person name="McMahon T.C."/>
            <person name="Patel A."/>
            <person name="Corsello M."/>
            <person name="Simon A."/>
            <person name="Xu W."/>
            <person name="Zhao M."/>
            <person name="Houk K.N."/>
            <person name="Garg N.K."/>
            <person name="Tang Y."/>
        </authorList>
    </citation>
    <scope>FUNCTION</scope>
</reference>
<dbReference type="EC" id="6.2.1.-" evidence="7"/>
<dbReference type="EMBL" id="JQFZ01000090">
    <property type="protein sequence ID" value="KGO59700.1"/>
    <property type="molecule type" value="Genomic_DNA"/>
</dbReference>
<dbReference type="RefSeq" id="XP_016600813.1">
    <property type="nucleotide sequence ID" value="XM_016742815.1"/>
</dbReference>
<dbReference type="SMR" id="A0A0A2J5U8"/>
<dbReference type="STRING" id="27334.A0A0A2J5U8"/>
<dbReference type="GeneID" id="27678234"/>
<dbReference type="VEuPathDB" id="FungiDB:PEXP_030520"/>
<dbReference type="HOGENOM" id="CLU_000022_59_7_1"/>
<dbReference type="OrthoDB" id="10253115at2759"/>
<dbReference type="PhylomeDB" id="A0A0A2J5U8"/>
<dbReference type="Proteomes" id="UP000030143">
    <property type="component" value="Unassembled WGS sequence"/>
</dbReference>
<dbReference type="GO" id="GO:0005524">
    <property type="term" value="F:ATP binding"/>
    <property type="evidence" value="ECO:0007669"/>
    <property type="project" value="UniProtKB-KW"/>
</dbReference>
<dbReference type="GO" id="GO:0031956">
    <property type="term" value="F:medium-chain fatty acid-CoA ligase activity"/>
    <property type="evidence" value="ECO:0007669"/>
    <property type="project" value="TreeGrafter"/>
</dbReference>
<dbReference type="GO" id="GO:0006631">
    <property type="term" value="P:fatty acid metabolic process"/>
    <property type="evidence" value="ECO:0007669"/>
    <property type="project" value="TreeGrafter"/>
</dbReference>
<dbReference type="Gene3D" id="3.30.300.30">
    <property type="match status" value="1"/>
</dbReference>
<dbReference type="Gene3D" id="3.40.50.12780">
    <property type="entry name" value="N-terminal domain of ligase-like"/>
    <property type="match status" value="2"/>
</dbReference>
<dbReference type="InterPro" id="IPR025110">
    <property type="entry name" value="AMP-bd_C"/>
</dbReference>
<dbReference type="InterPro" id="IPR045851">
    <property type="entry name" value="AMP-bd_C_sf"/>
</dbReference>
<dbReference type="InterPro" id="IPR000873">
    <property type="entry name" value="AMP-dep_synth/lig_dom"/>
</dbReference>
<dbReference type="InterPro" id="IPR042099">
    <property type="entry name" value="ANL_N_sf"/>
</dbReference>
<dbReference type="PANTHER" id="PTHR43201:SF6">
    <property type="entry name" value="ACYL COA SYNTHETASE (EUROFUNG)"/>
    <property type="match status" value="1"/>
</dbReference>
<dbReference type="PANTHER" id="PTHR43201">
    <property type="entry name" value="ACYL-COA SYNTHETASE"/>
    <property type="match status" value="1"/>
</dbReference>
<dbReference type="Pfam" id="PF00501">
    <property type="entry name" value="AMP-binding"/>
    <property type="match status" value="2"/>
</dbReference>
<dbReference type="Pfam" id="PF13193">
    <property type="entry name" value="AMP-binding_C"/>
    <property type="match status" value="1"/>
</dbReference>
<dbReference type="SUPFAM" id="SSF56801">
    <property type="entry name" value="Acetyl-CoA synthetase-like"/>
    <property type="match status" value="1"/>
</dbReference>
<feature type="chain" id="PRO_0000446462" description="Acyl-CoA ligase cnsG">
    <location>
        <begin position="1"/>
        <end position="481"/>
    </location>
</feature>
<feature type="short sequence motif" description="PTS2-type peroxisomal targeting signal" evidence="2">
    <location>
        <begin position="3"/>
        <end position="11"/>
    </location>
</feature>
<feature type="binding site" evidence="1">
    <location>
        <begin position="124"/>
        <end position="132"/>
    </location>
    <ligand>
        <name>ATP</name>
        <dbReference type="ChEBI" id="CHEBI:30616"/>
    </ligand>
</feature>
<feature type="binding site" evidence="1">
    <location>
        <begin position="263"/>
        <end position="268"/>
    </location>
    <ligand>
        <name>ATP</name>
        <dbReference type="ChEBI" id="CHEBI:30616"/>
    </ligand>
</feature>
<feature type="binding site" evidence="1">
    <location>
        <position position="268"/>
    </location>
    <ligand>
        <name>substrate</name>
    </ligand>
</feature>
<feature type="binding site" evidence="1">
    <location>
        <position position="353"/>
    </location>
    <ligand>
        <name>ATP</name>
        <dbReference type="ChEBI" id="CHEBI:30616"/>
    </ligand>
</feature>
<feature type="binding site" evidence="1">
    <location>
        <position position="368"/>
    </location>
    <ligand>
        <name>ATP</name>
        <dbReference type="ChEBI" id="CHEBI:30616"/>
    </ligand>
</feature>
<feature type="binding site" evidence="1">
    <location>
        <begin position="376"/>
        <end position="378"/>
    </location>
    <ligand>
        <name>CoA</name>
        <dbReference type="ChEBI" id="CHEBI:57287"/>
    </ligand>
</feature>
<feature type="binding site" evidence="1">
    <location>
        <begin position="446"/>
        <end position="448"/>
    </location>
    <ligand>
        <name>CoA</name>
        <dbReference type="ChEBI" id="CHEBI:57287"/>
    </ligand>
</feature>
<feature type="binding site" evidence="1">
    <location>
        <position position="466"/>
    </location>
    <ligand>
        <name>ATP</name>
        <dbReference type="ChEBI" id="CHEBI:30616"/>
    </ligand>
</feature>